<accession>O26937</accession>
<dbReference type="EMBL" id="AE000666">
    <property type="protein sequence ID" value="AAB85347.1"/>
    <property type="molecule type" value="Genomic_DNA"/>
</dbReference>
<dbReference type="PIR" id="C69213">
    <property type="entry name" value="C69213"/>
</dbReference>
<dbReference type="RefSeq" id="WP_010876482.1">
    <property type="nucleotide sequence ID" value="NC_000916.1"/>
</dbReference>
<dbReference type="SMR" id="O26937"/>
<dbReference type="FunCoup" id="O26937">
    <property type="interactions" value="9"/>
</dbReference>
<dbReference type="STRING" id="187420.MTH_849"/>
<dbReference type="PaxDb" id="187420-MTH_849"/>
<dbReference type="EnsemblBacteria" id="AAB85347">
    <property type="protein sequence ID" value="AAB85347"/>
    <property type="gene ID" value="MTH_849"/>
</dbReference>
<dbReference type="GeneID" id="1471257"/>
<dbReference type="KEGG" id="mth:MTH_849"/>
<dbReference type="PATRIC" id="fig|187420.15.peg.833"/>
<dbReference type="HOGENOM" id="CLU_007894_5_1_2"/>
<dbReference type="InParanoid" id="O26937"/>
<dbReference type="Proteomes" id="UP000005223">
    <property type="component" value="Chromosome"/>
</dbReference>
<dbReference type="GO" id="GO:0005886">
    <property type="term" value="C:plasma membrane"/>
    <property type="evidence" value="ECO:0007669"/>
    <property type="project" value="UniProtKB-SubCell"/>
</dbReference>
<dbReference type="GO" id="GO:0065002">
    <property type="term" value="P:intracellular protein transmembrane transport"/>
    <property type="evidence" value="ECO:0007669"/>
    <property type="project" value="UniProtKB-UniRule"/>
</dbReference>
<dbReference type="GO" id="GO:0006605">
    <property type="term" value="P:protein targeting"/>
    <property type="evidence" value="ECO:0007669"/>
    <property type="project" value="UniProtKB-UniRule"/>
</dbReference>
<dbReference type="Gene3D" id="3.30.70.3400">
    <property type="match status" value="1"/>
</dbReference>
<dbReference type="Gene3D" id="1.20.1640.10">
    <property type="entry name" value="Multidrug efflux transporter AcrB transmembrane domain"/>
    <property type="match status" value="1"/>
</dbReference>
<dbReference type="HAMAP" id="MF_01463_A">
    <property type="entry name" value="SecD_A"/>
    <property type="match status" value="1"/>
</dbReference>
<dbReference type="InterPro" id="IPR022813">
    <property type="entry name" value="SecD/SecF_arch_bac"/>
</dbReference>
<dbReference type="InterPro" id="IPR022646">
    <property type="entry name" value="SecD/SecF_CS"/>
</dbReference>
<dbReference type="InterPro" id="IPR024912">
    <property type="entry name" value="SecD_arc"/>
</dbReference>
<dbReference type="InterPro" id="IPR048634">
    <property type="entry name" value="SecD_SecF_C"/>
</dbReference>
<dbReference type="InterPro" id="IPR054384">
    <property type="entry name" value="SecDF_P1_head"/>
</dbReference>
<dbReference type="NCBIfam" id="NF006218">
    <property type="entry name" value="PRK08343.1-4"/>
    <property type="match status" value="1"/>
</dbReference>
<dbReference type="PANTHER" id="PTHR30081:SF1">
    <property type="entry name" value="PROTEIN TRANSLOCASE SUBUNIT SECD"/>
    <property type="match status" value="1"/>
</dbReference>
<dbReference type="PANTHER" id="PTHR30081">
    <property type="entry name" value="PROTEIN-EXPORT MEMBRANE PROTEIN SEC"/>
    <property type="match status" value="1"/>
</dbReference>
<dbReference type="Pfam" id="PF07549">
    <property type="entry name" value="Sec_GG"/>
    <property type="match status" value="1"/>
</dbReference>
<dbReference type="Pfam" id="PF02355">
    <property type="entry name" value="SecD_SecF_C"/>
    <property type="match status" value="1"/>
</dbReference>
<dbReference type="Pfam" id="PF22599">
    <property type="entry name" value="SecDF_P1_head"/>
    <property type="match status" value="1"/>
</dbReference>
<dbReference type="SUPFAM" id="SSF82866">
    <property type="entry name" value="Multidrug efflux transporter AcrB transmembrane domain"/>
    <property type="match status" value="1"/>
</dbReference>
<protein>
    <recommendedName>
        <fullName evidence="1">Protein-export membrane protein SecD</fullName>
    </recommendedName>
</protein>
<organism>
    <name type="scientific">Methanothermobacter thermautotrophicus (strain ATCC 29096 / DSM 1053 / JCM 10044 / NBRC 100330 / Delta H)</name>
    <name type="common">Methanobacterium thermoautotrophicum</name>
    <dbReference type="NCBI Taxonomy" id="187420"/>
    <lineage>
        <taxon>Archaea</taxon>
        <taxon>Methanobacteriati</taxon>
        <taxon>Methanobacteriota</taxon>
        <taxon>Methanomada group</taxon>
        <taxon>Methanobacteria</taxon>
        <taxon>Methanobacteriales</taxon>
        <taxon>Methanobacteriaceae</taxon>
        <taxon>Methanothermobacter</taxon>
    </lineage>
</organism>
<reference key="1">
    <citation type="journal article" date="1997" name="J. Bacteriol.">
        <title>Complete genome sequence of Methanobacterium thermoautotrophicum deltaH: functional analysis and comparative genomics.</title>
        <authorList>
            <person name="Smith D.R."/>
            <person name="Doucette-Stamm L.A."/>
            <person name="Deloughery C."/>
            <person name="Lee H.-M."/>
            <person name="Dubois J."/>
            <person name="Aldredge T."/>
            <person name="Bashirzadeh R."/>
            <person name="Blakely D."/>
            <person name="Cook R."/>
            <person name="Gilbert K."/>
            <person name="Harrison D."/>
            <person name="Hoang L."/>
            <person name="Keagle P."/>
            <person name="Lumm W."/>
            <person name="Pothier B."/>
            <person name="Qiu D."/>
            <person name="Spadafora R."/>
            <person name="Vicare R."/>
            <person name="Wang Y."/>
            <person name="Wierzbowski J."/>
            <person name="Gibson R."/>
            <person name="Jiwani N."/>
            <person name="Caruso A."/>
            <person name="Bush D."/>
            <person name="Safer H."/>
            <person name="Patwell D."/>
            <person name="Prabhakar S."/>
            <person name="McDougall S."/>
            <person name="Shimer G."/>
            <person name="Goyal A."/>
            <person name="Pietrovski S."/>
            <person name="Church G.M."/>
            <person name="Daniels C.J."/>
            <person name="Mao J.-I."/>
            <person name="Rice P."/>
            <person name="Noelling J."/>
            <person name="Reeve J.N."/>
        </authorList>
    </citation>
    <scope>NUCLEOTIDE SEQUENCE [LARGE SCALE GENOMIC DNA]</scope>
    <source>
        <strain>ATCC 29096 / DSM 1053 / JCM 10044 / NBRC 100330 / Delta H</strain>
    </source>
</reference>
<comment type="function">
    <text evidence="1">Involved in protein export.</text>
</comment>
<comment type="subunit">
    <text evidence="1">Part of the protein translocation apparatus. Forms a complex with SecF.</text>
</comment>
<comment type="subcellular location">
    <subcellularLocation>
        <location evidence="1">Cell membrane</location>
        <topology evidence="1">Multi-pass membrane protein</topology>
    </subcellularLocation>
</comment>
<comment type="similarity">
    <text evidence="1">Belongs to the SecD/SecF family. SecD subfamily.</text>
</comment>
<feature type="chain" id="PRO_0000095992" description="Protein-export membrane protein SecD">
    <location>
        <begin position="1"/>
        <end position="403"/>
    </location>
</feature>
<feature type="transmembrane region" description="Helical" evidence="1">
    <location>
        <begin position="14"/>
        <end position="34"/>
    </location>
</feature>
<feature type="transmembrane region" description="Helical" evidence="1">
    <location>
        <begin position="238"/>
        <end position="258"/>
    </location>
</feature>
<feature type="transmembrane region" description="Helical" evidence="1">
    <location>
        <begin position="265"/>
        <end position="285"/>
    </location>
</feature>
<feature type="transmembrane region" description="Helical" evidence="1">
    <location>
        <begin position="294"/>
        <end position="314"/>
    </location>
</feature>
<feature type="transmembrane region" description="Helical" evidence="1">
    <location>
        <begin position="336"/>
        <end position="356"/>
    </location>
</feature>
<feature type="transmembrane region" description="Helical" evidence="1">
    <location>
        <begin position="365"/>
        <end position="385"/>
    </location>
</feature>
<proteinExistence type="inferred from homology"/>
<sequence>MNRKVSKFLKDYRVILLIVLVAASITAISTMGIQQGLDLQGGSLIQIQLERPVDAATMNTVTSVLDKRLNIFGVKDVKVRASGDQNVIVEIAGVQPDQVADIVGKPGKFEAKIGNETVLTGTDIVSVQPPIITGNEWEVPFRLSTDGARKFAEAARGKAGEPVKMYLDDRLITAPEISAEVATGKPVTDVRITGAENSKAEAEVQAKEIETLLKSGSLPVKVKIVGVSSVSPELGKQFAEGAVIAGLLAVLAIAVILIVRYRSPILVLPIFFTTLAELLLILGAAAVIRWNIDLAAIAGILAAIGTGVDDQIIITDEVLSGEGRRTRRKFRIKDAFFIIFASAGTLIAAMLPLAYIGFSRGATGIGLLAGFAFTTVLGVIIGVFITRPVYARFIETFNVAGRK</sequence>
<evidence type="ECO:0000255" key="1">
    <source>
        <dbReference type="HAMAP-Rule" id="MF_01463"/>
    </source>
</evidence>
<gene>
    <name evidence="1" type="primary">secD</name>
    <name type="ordered locus">MTH_849</name>
</gene>
<name>SECD_METTH</name>
<keyword id="KW-1003">Cell membrane</keyword>
<keyword id="KW-0472">Membrane</keyword>
<keyword id="KW-0653">Protein transport</keyword>
<keyword id="KW-1185">Reference proteome</keyword>
<keyword id="KW-0811">Translocation</keyword>
<keyword id="KW-0812">Transmembrane</keyword>
<keyword id="KW-1133">Transmembrane helix</keyword>
<keyword id="KW-0813">Transport</keyword>